<protein>
    <recommendedName>
        <fullName evidence="1">N-acetyldiaminopimelate deacetylase</fullName>
        <ecNumber evidence="1">3.5.1.47</ecNumber>
    </recommendedName>
</protein>
<comment type="function">
    <text evidence="1">Catalyzes the conversion of N-acetyl-diaminopimelate to diaminopimelate and acetate.</text>
</comment>
<comment type="catalytic activity">
    <reaction evidence="1">
        <text>N-acetyl-(2S,6S)-2,6-diaminopimelate + H2O = (2S,6S)-2,6-diaminopimelate + acetate</text>
        <dbReference type="Rhea" id="RHEA:20405"/>
        <dbReference type="ChEBI" id="CHEBI:15377"/>
        <dbReference type="ChEBI" id="CHEBI:30089"/>
        <dbReference type="ChEBI" id="CHEBI:57609"/>
        <dbReference type="ChEBI" id="CHEBI:58767"/>
        <dbReference type="EC" id="3.5.1.47"/>
    </reaction>
</comment>
<comment type="pathway">
    <text evidence="1">Amino-acid biosynthesis; L-lysine biosynthesis via DAP pathway; LL-2,6-diaminopimelate from (S)-tetrahydrodipicolinate (acetylase route): step 3/3.</text>
</comment>
<comment type="similarity">
    <text evidence="1">Belongs to the peptidase M20A family. N-acetyldiaminopimelate deacetylase subfamily.</text>
</comment>
<gene>
    <name type="ordered locus">Exig_2019</name>
</gene>
<sequence>MEYAIEMRRELHKIPEPGFKEFKTQAFILDQIRSYPEDRVSYDTFETGVFVRVKGLTGNRTIGYRADIDGLPIEEATGLPFCSEHPGFMHACGHDVHASIALGLLRRIVELPVMDDVVFLFQPAEEGPGGAEPMIKSPLFEKYRPSEMYGLHVAPEYPVGTIASRPGVLFASAREVHITIYGQSGHAAFPHLTIDTVVAQAALIMQLQTIVSRSINPMNCSVITIGKVDAGIRENVIAGRALLDGTMRALNGTDMEKLEQRVRDIIRGIEASFGVKIDLQFGNRYYEVVNDQRVVDKFSSFVKMNANYIECDAAMTGEDFGFMLKEIPGMMFWLGVNNATSGLHQPTLNPDEEAIPFVINLLDHYFREYV</sequence>
<keyword id="KW-0028">Amino-acid biosynthesis</keyword>
<keyword id="KW-0220">Diaminopimelate biosynthesis</keyword>
<keyword id="KW-0378">Hydrolase</keyword>
<keyword id="KW-0457">Lysine biosynthesis</keyword>
<keyword id="KW-1185">Reference proteome</keyword>
<feature type="chain" id="PRO_0000376754" description="N-acetyldiaminopimelate deacetylase">
    <location>
        <begin position="1"/>
        <end position="370"/>
    </location>
</feature>
<feature type="active site" evidence="1">
    <location>
        <position position="67"/>
    </location>
</feature>
<feature type="active site" description="Proton acceptor" evidence="1">
    <location>
        <position position="126"/>
    </location>
</feature>
<accession>B1YJ90</accession>
<name>DAPEL_EXIS2</name>
<evidence type="ECO:0000255" key="1">
    <source>
        <dbReference type="HAMAP-Rule" id="MF_01692"/>
    </source>
</evidence>
<dbReference type="EC" id="3.5.1.47" evidence="1"/>
<dbReference type="EMBL" id="CP001022">
    <property type="protein sequence ID" value="ACB61471.1"/>
    <property type="molecule type" value="Genomic_DNA"/>
</dbReference>
<dbReference type="RefSeq" id="WP_012370889.1">
    <property type="nucleotide sequence ID" value="NC_010556.1"/>
</dbReference>
<dbReference type="SMR" id="B1YJ90"/>
<dbReference type="STRING" id="262543.Exig_2019"/>
<dbReference type="MEROPS" id="M20.A27"/>
<dbReference type="KEGG" id="esi:Exig_2019"/>
<dbReference type="eggNOG" id="COG1473">
    <property type="taxonomic scope" value="Bacteria"/>
</dbReference>
<dbReference type="HOGENOM" id="CLU_023257_0_1_9"/>
<dbReference type="OrthoDB" id="9776731at2"/>
<dbReference type="UniPathway" id="UPA00034">
    <property type="reaction ID" value="UER00024"/>
</dbReference>
<dbReference type="Proteomes" id="UP000001681">
    <property type="component" value="Chromosome"/>
</dbReference>
<dbReference type="GO" id="GO:0050118">
    <property type="term" value="F:N-acetyldiaminopimelate deacetylase activity"/>
    <property type="evidence" value="ECO:0007669"/>
    <property type="project" value="UniProtKB-UniRule"/>
</dbReference>
<dbReference type="GO" id="GO:0019877">
    <property type="term" value="P:diaminopimelate biosynthetic process"/>
    <property type="evidence" value="ECO:0007669"/>
    <property type="project" value="UniProtKB-UniRule"/>
</dbReference>
<dbReference type="GO" id="GO:0009089">
    <property type="term" value="P:lysine biosynthetic process via diaminopimelate"/>
    <property type="evidence" value="ECO:0007669"/>
    <property type="project" value="UniProtKB-UniRule"/>
</dbReference>
<dbReference type="CDD" id="cd05670">
    <property type="entry name" value="M20_Acy1_YkuR-like"/>
    <property type="match status" value="1"/>
</dbReference>
<dbReference type="FunFam" id="3.30.70.360:FF:000001">
    <property type="entry name" value="N-acetyldiaminopimelate deacetylase"/>
    <property type="match status" value="1"/>
</dbReference>
<dbReference type="Gene3D" id="3.30.70.360">
    <property type="match status" value="1"/>
</dbReference>
<dbReference type="Gene3D" id="3.40.630.10">
    <property type="entry name" value="Zn peptidases"/>
    <property type="match status" value="1"/>
</dbReference>
<dbReference type="HAMAP" id="MF_01692">
    <property type="entry name" value="DapEL"/>
    <property type="match status" value="1"/>
</dbReference>
<dbReference type="InterPro" id="IPR023905">
    <property type="entry name" value="AcetylDAP_deacetylase"/>
</dbReference>
<dbReference type="InterPro" id="IPR017439">
    <property type="entry name" value="Amidohydrolase"/>
</dbReference>
<dbReference type="InterPro" id="IPR036264">
    <property type="entry name" value="Bact_exopeptidase_dim_dom"/>
</dbReference>
<dbReference type="InterPro" id="IPR002933">
    <property type="entry name" value="Peptidase_M20"/>
</dbReference>
<dbReference type="InterPro" id="IPR011650">
    <property type="entry name" value="Peptidase_M20_dimer"/>
</dbReference>
<dbReference type="NCBIfam" id="TIGR01891">
    <property type="entry name" value="amidohydrolases"/>
    <property type="match status" value="1"/>
</dbReference>
<dbReference type="PANTHER" id="PTHR11014:SF98">
    <property type="entry name" value="N-ACETYLDIAMINOPIMELATE DEACETYLASE"/>
    <property type="match status" value="1"/>
</dbReference>
<dbReference type="PANTHER" id="PTHR11014">
    <property type="entry name" value="PEPTIDASE M20 FAMILY MEMBER"/>
    <property type="match status" value="1"/>
</dbReference>
<dbReference type="Pfam" id="PF07687">
    <property type="entry name" value="M20_dimer"/>
    <property type="match status" value="1"/>
</dbReference>
<dbReference type="Pfam" id="PF01546">
    <property type="entry name" value="Peptidase_M20"/>
    <property type="match status" value="1"/>
</dbReference>
<dbReference type="PIRSF" id="PIRSF005962">
    <property type="entry name" value="Pept_M20D_amidohydro"/>
    <property type="match status" value="1"/>
</dbReference>
<dbReference type="SUPFAM" id="SSF55031">
    <property type="entry name" value="Bacterial exopeptidase dimerisation domain"/>
    <property type="match status" value="1"/>
</dbReference>
<dbReference type="SUPFAM" id="SSF53187">
    <property type="entry name" value="Zn-dependent exopeptidases"/>
    <property type="match status" value="1"/>
</dbReference>
<organism>
    <name type="scientific">Exiguobacterium sibiricum (strain DSM 17290 / CCUG 55495 / CIP 109462 / JCM 13490 / 255-15)</name>
    <dbReference type="NCBI Taxonomy" id="262543"/>
    <lineage>
        <taxon>Bacteria</taxon>
        <taxon>Bacillati</taxon>
        <taxon>Bacillota</taxon>
        <taxon>Bacilli</taxon>
        <taxon>Bacillales</taxon>
        <taxon>Bacillales Family XII. Incertae Sedis</taxon>
        <taxon>Exiguobacterium</taxon>
    </lineage>
</organism>
<reference key="1">
    <citation type="submission" date="2008-04" db="EMBL/GenBank/DDBJ databases">
        <title>Complete sequence of chromosome of Exiguobacterium sibiricum 255-15.</title>
        <authorList>
            <consortium name="US DOE Joint Genome Institute"/>
            <person name="Copeland A."/>
            <person name="Lucas S."/>
            <person name="Lapidus A."/>
            <person name="Glavina del Rio T."/>
            <person name="Dalin E."/>
            <person name="Tice H."/>
            <person name="Bruce D."/>
            <person name="Goodwin L."/>
            <person name="Pitluck S."/>
            <person name="Kiss H."/>
            <person name="Chertkov O."/>
            <person name="Monk C."/>
            <person name="Brettin T."/>
            <person name="Detter J.C."/>
            <person name="Han C."/>
            <person name="Kuske C.R."/>
            <person name="Schmutz J."/>
            <person name="Larimer F."/>
            <person name="Land M."/>
            <person name="Hauser L."/>
            <person name="Kyrpides N."/>
            <person name="Mikhailova N."/>
            <person name="Vishnivetskaya T."/>
            <person name="Rodrigues D.F."/>
            <person name="Gilichinsky D."/>
            <person name="Tiedje J."/>
            <person name="Richardson P."/>
        </authorList>
    </citation>
    <scope>NUCLEOTIDE SEQUENCE [LARGE SCALE GENOMIC DNA]</scope>
    <source>
        <strain>DSM 17290 / CCUG 55495 / CIP 109462 / JCM 13490 / 255-15</strain>
    </source>
</reference>
<proteinExistence type="inferred from homology"/>